<comment type="function">
    <text evidence="4 5">Electron transfer subunit of the periplasmic nitrate reductase complex NapAB. Transfers electrons to NapA subunit, thus allowing electron flow between membrane and periplasm. Essential for periplasmic nitrate reduction with nitrate as the terminal electron acceptor.</text>
</comment>
<comment type="subunit">
    <text evidence="1">Component of the periplasmic nitrate reductase NapAB complex composed of NapA and NapB.</text>
</comment>
<comment type="subcellular location">
    <subcellularLocation>
        <location evidence="1">Periplasm</location>
    </subcellularLocation>
</comment>
<comment type="PTM">
    <text evidence="5">Binds 2 heme C groups per subunit.</text>
</comment>
<comment type="disruption phenotype">
    <text evidence="5">Mutants fail to grow by nitrate respiration and also fail to reduce nitrate and contain increased amounts of NapA.</text>
</comment>
<comment type="similarity">
    <text evidence="2">Belongs to the NapB family.</text>
</comment>
<comment type="sequence caution" evidence="6">
    <conflict type="erroneous initiation">
        <sequence resource="EMBL-CDS" id="CAE10260"/>
    </conflict>
    <text>Truncated N-terminus.</text>
</comment>
<sequence length="186" mass="20626">MKTSKLNFLTLVASTGLALAFLSGCTSNTGTTQSAKLYSEEELGLRKATIYNENKTLVKEFEYSKEPAGASKVYERSFENAPPMIPHDVEGMMDMSREINMCTSCHLPEVAEAAAATPMPKSHFFNMRTGEDLKGAMDEARYNCSQCHTPQANVTPLVDNRFRPEFRGEDAKNRSNLIDTLNEGVK</sequence>
<protein>
    <recommendedName>
        <fullName>Periplasmic nitrate reductase, electron transfer subunit</fullName>
    </recommendedName>
    <alternativeName>
        <fullName evidence="1">Diheme cytochrome c NapB</fullName>
    </alternativeName>
</protein>
<keyword id="KW-0249">Electron transport</keyword>
<keyword id="KW-0349">Heme</keyword>
<keyword id="KW-0408">Iron</keyword>
<keyword id="KW-0479">Metal-binding</keyword>
<keyword id="KW-0574">Periplasm</keyword>
<keyword id="KW-1185">Reference proteome</keyword>
<keyword id="KW-0732">Signal</keyword>
<keyword id="KW-0813">Transport</keyword>
<gene>
    <name evidence="8" type="primary">napB</name>
    <name type="ordered locus">WS1174</name>
</gene>
<accession>Q7M963</accession>
<accession>Q8GBF8</accession>
<reference evidence="6 7" key="1">
    <citation type="journal article" date="2003" name="Mol. Microbiol.">
        <title>Electron transport to periplasmic nitrate reductase (NapA) of Wolinella succinogenes is independent of a NapC protein.</title>
        <authorList>
            <person name="Simon J."/>
            <person name="Saenger M."/>
            <person name="Schuster S.C."/>
            <person name="Gross R."/>
        </authorList>
    </citation>
    <scope>NUCLEOTIDE SEQUENCE [GENOMIC DNA]</scope>
    <scope>FUNCTION</scope>
    <source>
        <strain>ATCC 29543 / DSM 1740 / CCUG 13145 / JCM 31913 / LMG 7466 / NCTC 11488 / FDC 602W</strain>
    </source>
</reference>
<reference evidence="8" key="2">
    <citation type="journal article" date="2003" name="Proc. Natl. Acad. Sci. U.S.A.">
        <title>Complete genome sequence and analysis of Wolinella succinogenes.</title>
        <authorList>
            <person name="Baar C."/>
            <person name="Eppinger M."/>
            <person name="Raddatz G."/>
            <person name="Simon J."/>
            <person name="Lanz C."/>
            <person name="Klimmek O."/>
            <person name="Nandakumar R."/>
            <person name="Gross R."/>
            <person name="Rosinus A."/>
            <person name="Keller H."/>
            <person name="Jagtap P."/>
            <person name="Linke B."/>
            <person name="Meyer F."/>
            <person name="Lederer H."/>
            <person name="Schuster S.C."/>
        </authorList>
    </citation>
    <scope>NUCLEOTIDE SEQUENCE [LARGE SCALE GENOMIC DNA]</scope>
    <source>
        <strain>ATCC 29543 / DSM 1740 / CCUG 13145 / JCM 31913 / LMG 7466 / NCTC 11488 / FDC 602W</strain>
    </source>
</reference>
<reference evidence="6" key="3">
    <citation type="journal article" date="2007" name="Microbiology">
        <title>Role of individual nap gene cluster products in NapC-independent nitrate respiration of Wolinella succinogenes.</title>
        <authorList>
            <person name="Kern M."/>
            <person name="Mager A.M."/>
            <person name="Simon J."/>
        </authorList>
    </citation>
    <scope>FUNCTION</scope>
    <scope>PTM</scope>
    <scope>DISRUPTION PHENOTYPE</scope>
</reference>
<organism>
    <name type="scientific">Wolinella succinogenes (strain ATCC 29543 / DSM 1740 / CCUG 13145 / JCM 31913 / LMG 7466 / NCTC 11488 / FDC 602W)</name>
    <name type="common">Vibrio succinogenes</name>
    <dbReference type="NCBI Taxonomy" id="273121"/>
    <lineage>
        <taxon>Bacteria</taxon>
        <taxon>Pseudomonadati</taxon>
        <taxon>Campylobacterota</taxon>
        <taxon>Epsilonproteobacteria</taxon>
        <taxon>Campylobacterales</taxon>
        <taxon>Helicobacteraceae</taxon>
        <taxon>Wolinella</taxon>
    </lineage>
</organism>
<name>NAPB_WOLSU</name>
<evidence type="ECO:0000250" key="1">
    <source>
        <dbReference type="UniProtKB" id="P44654"/>
    </source>
</evidence>
<evidence type="ECO:0000255" key="2"/>
<evidence type="ECO:0000255" key="3">
    <source>
        <dbReference type="PROSITE-ProRule" id="PRU00303"/>
    </source>
</evidence>
<evidence type="ECO:0000269" key="4">
    <source>
    </source>
</evidence>
<evidence type="ECO:0000269" key="5">
    <source>
    </source>
</evidence>
<evidence type="ECO:0000305" key="6"/>
<evidence type="ECO:0000312" key="7">
    <source>
        <dbReference type="EMBL" id="CAD55550.1"/>
    </source>
</evidence>
<evidence type="ECO:0000312" key="8">
    <source>
        <dbReference type="EMBL" id="CAE10260.1"/>
    </source>
</evidence>
<dbReference type="EMBL" id="AJ512686">
    <property type="protein sequence ID" value="CAD55550.1"/>
    <property type="molecule type" value="Genomic_DNA"/>
</dbReference>
<dbReference type="EMBL" id="BX571660">
    <property type="protein sequence ID" value="CAE10260.1"/>
    <property type="status" value="ALT_INIT"/>
    <property type="molecule type" value="Genomic_DNA"/>
</dbReference>
<dbReference type="RefSeq" id="WP_041571806.1">
    <property type="nucleotide sequence ID" value="NC_005090.1"/>
</dbReference>
<dbReference type="STRING" id="273121.WS1174"/>
<dbReference type="KEGG" id="wsu:WS1174"/>
<dbReference type="eggNOG" id="COG3043">
    <property type="taxonomic scope" value="Bacteria"/>
</dbReference>
<dbReference type="HOGENOM" id="CLU_2385369_0_0_7"/>
<dbReference type="Proteomes" id="UP000000422">
    <property type="component" value="Chromosome"/>
</dbReference>
<dbReference type="GO" id="GO:0042597">
    <property type="term" value="C:periplasmic space"/>
    <property type="evidence" value="ECO:0007669"/>
    <property type="project" value="UniProtKB-SubCell"/>
</dbReference>
<dbReference type="GO" id="GO:0046872">
    <property type="term" value="F:metal ion binding"/>
    <property type="evidence" value="ECO:0007669"/>
    <property type="project" value="UniProtKB-KW"/>
</dbReference>
<dbReference type="GO" id="GO:0009061">
    <property type="term" value="P:anaerobic respiration"/>
    <property type="evidence" value="ECO:0007669"/>
    <property type="project" value="InterPro"/>
</dbReference>
<dbReference type="Gene3D" id="1.10.1130.10">
    <property type="entry name" value="Flavocytochrome C3, Chain A"/>
    <property type="match status" value="1"/>
</dbReference>
<dbReference type="InterPro" id="IPR036280">
    <property type="entry name" value="Multihaem_cyt_sf"/>
</dbReference>
<dbReference type="InterPro" id="IPR005591">
    <property type="entry name" value="NapB"/>
</dbReference>
<dbReference type="PANTHER" id="PTHR38604">
    <property type="entry name" value="PERIPLASMIC NITRATE REDUCTASE, ELECTRON TRANSFER SUBUNIT"/>
    <property type="match status" value="1"/>
</dbReference>
<dbReference type="PANTHER" id="PTHR38604:SF1">
    <property type="entry name" value="PERIPLASMIC NITRATE REDUCTASE, ELECTRON TRANSFER SUBUNIT"/>
    <property type="match status" value="1"/>
</dbReference>
<dbReference type="Pfam" id="PF03892">
    <property type="entry name" value="NapB"/>
    <property type="match status" value="1"/>
</dbReference>
<dbReference type="SUPFAM" id="SSF48695">
    <property type="entry name" value="Multiheme cytochromes"/>
    <property type="match status" value="1"/>
</dbReference>
<dbReference type="PROSITE" id="PS51008">
    <property type="entry name" value="MULTIHEME_CYTC"/>
    <property type="match status" value="1"/>
</dbReference>
<dbReference type="PROSITE" id="PS51257">
    <property type="entry name" value="PROKAR_LIPOPROTEIN"/>
    <property type="match status" value="1"/>
</dbReference>
<feature type="signal peptide" evidence="3">
    <location>
        <begin position="1"/>
        <end position="20"/>
    </location>
</feature>
<feature type="chain" id="PRO_0000417027" description="Periplasmic nitrate reductase, electron transfer subunit">
    <location>
        <begin position="21"/>
        <end position="186"/>
    </location>
</feature>
<feature type="binding site" description="axial binding residue" evidence="1">
    <location>
        <position position="87"/>
    </location>
    <ligand>
        <name>heme c</name>
        <dbReference type="ChEBI" id="CHEBI:61717"/>
        <label>1</label>
    </ligand>
    <ligandPart>
        <name>Fe</name>
        <dbReference type="ChEBI" id="CHEBI:18248"/>
    </ligandPart>
</feature>
<feature type="binding site" description="covalent" evidence="1">
    <location>
        <position position="102"/>
    </location>
    <ligand>
        <name>heme c</name>
        <dbReference type="ChEBI" id="CHEBI:61717"/>
        <label>1</label>
    </ligand>
</feature>
<feature type="binding site" description="covalent" evidence="1">
    <location>
        <position position="105"/>
    </location>
    <ligand>
        <name>heme c</name>
        <dbReference type="ChEBI" id="CHEBI:61717"/>
        <label>1</label>
    </ligand>
</feature>
<feature type="binding site" description="axial binding residue" evidence="1">
    <location>
        <position position="106"/>
    </location>
    <ligand>
        <name>heme c</name>
        <dbReference type="ChEBI" id="CHEBI:61717"/>
        <label>1</label>
    </ligand>
    <ligandPart>
        <name>Fe</name>
        <dbReference type="ChEBI" id="CHEBI:18248"/>
    </ligandPart>
</feature>
<feature type="binding site" description="axial binding residue" evidence="1">
    <location>
        <position position="123"/>
    </location>
    <ligand>
        <name>heme c</name>
        <dbReference type="ChEBI" id="CHEBI:61717"/>
        <label>2</label>
    </ligand>
    <ligandPart>
        <name>Fe</name>
        <dbReference type="ChEBI" id="CHEBI:18248"/>
    </ligandPart>
</feature>
<feature type="binding site" description="covalent" evidence="1">
    <location>
        <position position="144"/>
    </location>
    <ligand>
        <name>heme c</name>
        <dbReference type="ChEBI" id="CHEBI:61717"/>
        <label>2</label>
    </ligand>
</feature>
<feature type="binding site" description="covalent" evidence="1">
    <location>
        <position position="147"/>
    </location>
    <ligand>
        <name>heme c</name>
        <dbReference type="ChEBI" id="CHEBI:61717"/>
        <label>2</label>
    </ligand>
</feature>
<feature type="binding site" description="axial binding residue" evidence="1">
    <location>
        <position position="148"/>
    </location>
    <ligand>
        <name>heme c</name>
        <dbReference type="ChEBI" id="CHEBI:61717"/>
        <label>2</label>
    </ligand>
    <ligandPart>
        <name>Fe</name>
        <dbReference type="ChEBI" id="CHEBI:18248"/>
    </ligandPart>
</feature>
<proteinExistence type="inferred from homology"/>